<gene>
    <name type="primary">epd2</name>
    <name type="synonym">epn2</name>
</gene>
<name>EPD2_CARAU</name>
<accession>P12958</accession>
<evidence type="ECO:0000255" key="1"/>
<evidence type="ECO:0000305" key="2"/>
<feature type="signal peptide">
    <location>
        <begin position="1"/>
        <end position="20"/>
    </location>
</feature>
<feature type="chain" id="PRO_0000008342" description="Ependymin-2">
    <location>
        <begin position="21"/>
        <end position="215"/>
    </location>
</feature>
<feature type="glycosylation site" description="N-linked (GlcNAc...) asparagine" evidence="1">
    <location>
        <position position="71"/>
    </location>
</feature>
<feature type="glycosylation site" description="N-linked (GlcNAc...) asparagine" evidence="1">
    <location>
        <position position="94"/>
    </location>
</feature>
<reference key="1">
    <citation type="journal article" date="1989" name="J. Biol. Chem.">
        <title>Biosynthesis of ependymins from goldfish brain.</title>
        <authorList>
            <person name="Koenigstorfer A."/>
            <person name="Sterrer S."/>
            <person name="Hoffmann W."/>
        </authorList>
    </citation>
    <scope>NUCLEOTIDE SEQUENCE [MRNA]</scope>
    <source>
        <tissue>Brain</tissue>
    </source>
</reference>
<protein>
    <recommendedName>
        <fullName>Ependymin-2</fullName>
    </recommendedName>
    <alternativeName>
        <fullName>Ependymin II</fullName>
        <shortName>EPD-II</shortName>
    </alternativeName>
</protein>
<dbReference type="EMBL" id="J04986">
    <property type="protein sequence ID" value="AAA49165.1"/>
    <property type="status" value="ALT_INIT"/>
    <property type="molecule type" value="mRNA"/>
</dbReference>
<dbReference type="PIR" id="A32636">
    <property type="entry name" value="A32636"/>
</dbReference>
<dbReference type="SMR" id="P12958"/>
<dbReference type="GlyCosmos" id="P12958">
    <property type="glycosylation" value="2 sites, No reported glycans"/>
</dbReference>
<dbReference type="Proteomes" id="UP000515129">
    <property type="component" value="Unplaced"/>
</dbReference>
<dbReference type="GO" id="GO:0005576">
    <property type="term" value="C:extracellular region"/>
    <property type="evidence" value="ECO:0007669"/>
    <property type="project" value="UniProtKB-SubCell"/>
</dbReference>
<dbReference type="GO" id="GO:0005764">
    <property type="term" value="C:lysosome"/>
    <property type="evidence" value="ECO:0007669"/>
    <property type="project" value="TreeGrafter"/>
</dbReference>
<dbReference type="GO" id="GO:0005509">
    <property type="term" value="F:calcium ion binding"/>
    <property type="evidence" value="ECO:0007669"/>
    <property type="project" value="InterPro"/>
</dbReference>
<dbReference type="GO" id="GO:0007160">
    <property type="term" value="P:cell-matrix adhesion"/>
    <property type="evidence" value="ECO:0007669"/>
    <property type="project" value="InterPro"/>
</dbReference>
<dbReference type="InterPro" id="IPR001299">
    <property type="entry name" value="Ependymin"/>
</dbReference>
<dbReference type="InterPro" id="IPR018224">
    <property type="entry name" value="Ependymin_CS"/>
</dbReference>
<dbReference type="PANTHER" id="PTHR10697:SF5">
    <property type="entry name" value="EPENDYMIN-RELATED"/>
    <property type="match status" value="1"/>
</dbReference>
<dbReference type="PANTHER" id="PTHR10697">
    <property type="entry name" value="MAMMALIAN EPENDYMIN-RELATED PROTEIN 1"/>
    <property type="match status" value="1"/>
</dbReference>
<dbReference type="Pfam" id="PF00811">
    <property type="entry name" value="Ependymin"/>
    <property type="match status" value="1"/>
</dbReference>
<dbReference type="PRINTS" id="PR00317">
    <property type="entry name" value="EPENDYMIN"/>
</dbReference>
<dbReference type="SMART" id="SM00026">
    <property type="entry name" value="EPEND"/>
    <property type="match status" value="1"/>
</dbReference>
<dbReference type="PROSITE" id="PS00898">
    <property type="entry name" value="EPENDYMIN_1"/>
    <property type="match status" value="1"/>
</dbReference>
<dbReference type="PROSITE" id="PS00899">
    <property type="entry name" value="EPENDYMIN_2"/>
    <property type="match status" value="1"/>
</dbReference>
<organism>
    <name type="scientific">Carassius auratus</name>
    <name type="common">Goldfish</name>
    <dbReference type="NCBI Taxonomy" id="7957"/>
    <lineage>
        <taxon>Eukaryota</taxon>
        <taxon>Metazoa</taxon>
        <taxon>Chordata</taxon>
        <taxon>Craniata</taxon>
        <taxon>Vertebrata</taxon>
        <taxon>Euteleostomi</taxon>
        <taxon>Actinopterygii</taxon>
        <taxon>Neopterygii</taxon>
        <taxon>Teleostei</taxon>
        <taxon>Ostariophysi</taxon>
        <taxon>Cypriniformes</taxon>
        <taxon>Cyprinidae</taxon>
        <taxon>Cyprininae</taxon>
        <taxon>Carassius</taxon>
    </lineage>
</organism>
<sequence length="215" mass="23934">MHTVKLLCVVFSCLCAVAWASSDRQPCHSPPLISGTMKVVSTGGHDLASGEFSYDSKANKFRFVEDAAHANKTSHTDVLVHFEEGTLYEIDSKNESCKKETLQFRKHLMEIPPDATHESEIYMGSPSITEQGLRVRVWSGKLPELHAHYSLSITSCGCLPVSGSYYGDKKDLLFSFFGVETEVDDLQVFVPPAYCEGVAFEEAPDDHSFFDLFHD</sequence>
<proteinExistence type="evidence at transcript level"/>
<comment type="function">
    <text>May play a role in neural plasticity. May be involved during axon regeneration.</text>
</comment>
<comment type="subunit">
    <text>Forms disulfide-linked dimers.</text>
</comment>
<comment type="subcellular location">
    <subcellularLocation>
        <location>Secreted</location>
    </subcellularLocation>
</comment>
<comment type="tissue specificity">
    <text>EPDs are synthesized in the meninx and secreted in the cerebrospinal fluid.</text>
</comment>
<comment type="PTM">
    <text>Different glycosylation variants are known as EPD-beta and EPD-gamma.</text>
</comment>
<comment type="PTM">
    <text>Binds calcium through the terminal sialic acids.</text>
</comment>
<comment type="similarity">
    <text evidence="2">Belongs to the ependymin family.</text>
</comment>
<comment type="sequence caution" evidence="2">
    <conflict type="erroneous initiation">
        <sequence resource="EMBL-CDS" id="AAA49165"/>
    </conflict>
</comment>
<keyword id="KW-0106">Calcium</keyword>
<keyword id="KW-1015">Disulfide bond</keyword>
<keyword id="KW-0325">Glycoprotein</keyword>
<keyword id="KW-1185">Reference proteome</keyword>
<keyword id="KW-0964">Secreted</keyword>
<keyword id="KW-0732">Signal</keyword>